<dbReference type="EMBL" id="Y07683">
    <property type="protein sequence ID" value="CAA68947.1"/>
    <property type="molecule type" value="mRNA"/>
</dbReference>
<dbReference type="EMBL" id="AB016608">
    <property type="protein sequence ID" value="BAA76515.1"/>
    <property type="molecule type" value="mRNA"/>
</dbReference>
<dbReference type="EMBL" id="AP000781">
    <property type="status" value="NOT_ANNOTATED_CDS"/>
    <property type="molecule type" value="Genomic_DNA"/>
</dbReference>
<dbReference type="EMBL" id="BC074792">
    <property type="protein sequence ID" value="AAH74792.1"/>
    <property type="molecule type" value="mRNA"/>
</dbReference>
<dbReference type="EMBL" id="BC074793">
    <property type="protein sequence ID" value="AAH74793.1"/>
    <property type="molecule type" value="mRNA"/>
</dbReference>
<dbReference type="EMBL" id="BC109287">
    <property type="protein sequence ID" value="AAI09288.1"/>
    <property type="molecule type" value="mRNA"/>
</dbReference>
<dbReference type="CCDS" id="CCDS7953.1"/>
<dbReference type="RefSeq" id="NP_002550.2">
    <property type="nucleotide sequence ID" value="NM_002559.3"/>
</dbReference>
<dbReference type="RefSeq" id="XP_011543371.1">
    <property type="nucleotide sequence ID" value="XM_011545069.3"/>
</dbReference>
<dbReference type="RefSeq" id="XP_011543372.1">
    <property type="nucleotide sequence ID" value="XM_011545070.3"/>
</dbReference>
<dbReference type="PDB" id="5SVJ">
    <property type="method" value="X-ray"/>
    <property type="resolution" value="2.98 A"/>
    <property type="chains" value="A=6-364"/>
</dbReference>
<dbReference type="PDB" id="5SVK">
    <property type="method" value="X-ray"/>
    <property type="resolution" value="2.77 A"/>
    <property type="chains" value="A/B=6-364"/>
</dbReference>
<dbReference type="PDB" id="5SVL">
    <property type="method" value="X-ray"/>
    <property type="resolution" value="2.90 A"/>
    <property type="chains" value="A/B=6-364"/>
</dbReference>
<dbReference type="PDB" id="5SVM">
    <property type="method" value="X-ray"/>
    <property type="resolution" value="3.09 A"/>
    <property type="chains" value="A/B=6-364"/>
</dbReference>
<dbReference type="PDB" id="5SVP">
    <property type="method" value="X-ray"/>
    <property type="resolution" value="3.30 A"/>
    <property type="chains" value="A/B=6-364"/>
</dbReference>
<dbReference type="PDB" id="5SVQ">
    <property type="method" value="X-ray"/>
    <property type="resolution" value="3.25 A"/>
    <property type="chains" value="A=6-364"/>
</dbReference>
<dbReference type="PDB" id="5SVR">
    <property type="method" value="X-ray"/>
    <property type="resolution" value="3.13 A"/>
    <property type="chains" value="A=6-364"/>
</dbReference>
<dbReference type="PDB" id="5SVS">
    <property type="method" value="X-ray"/>
    <property type="resolution" value="4.03 A"/>
    <property type="chains" value="A=6-364"/>
</dbReference>
<dbReference type="PDB" id="5SVT">
    <property type="method" value="X-ray"/>
    <property type="resolution" value="3.79 A"/>
    <property type="chains" value="A=6-364"/>
</dbReference>
<dbReference type="PDB" id="5YVE">
    <property type="method" value="X-ray"/>
    <property type="resolution" value="3.40 A"/>
    <property type="chains" value="A=6-364"/>
</dbReference>
<dbReference type="PDB" id="6AH4">
    <property type="method" value="X-ray"/>
    <property type="resolution" value="3.30 A"/>
    <property type="chains" value="A/B/C=17-363"/>
</dbReference>
<dbReference type="PDB" id="6AH5">
    <property type="method" value="X-ray"/>
    <property type="resolution" value="3.82 A"/>
    <property type="chains" value="A/B/C=17-363"/>
</dbReference>
<dbReference type="PDB" id="9IK1">
    <property type="method" value="EM"/>
    <property type="resolution" value="2.61 A"/>
    <property type="chains" value="A/B/C=6-364"/>
</dbReference>
<dbReference type="PDBsum" id="5SVJ"/>
<dbReference type="PDBsum" id="5SVK"/>
<dbReference type="PDBsum" id="5SVL"/>
<dbReference type="PDBsum" id="5SVM"/>
<dbReference type="PDBsum" id="5SVP"/>
<dbReference type="PDBsum" id="5SVQ"/>
<dbReference type="PDBsum" id="5SVR"/>
<dbReference type="PDBsum" id="5SVS"/>
<dbReference type="PDBsum" id="5SVT"/>
<dbReference type="PDBsum" id="5YVE"/>
<dbReference type="PDBsum" id="6AH4"/>
<dbReference type="PDBsum" id="6AH5"/>
<dbReference type="PDBsum" id="9IK1"/>
<dbReference type="EMDB" id="EMD-60647"/>
<dbReference type="SMR" id="P56373"/>
<dbReference type="BioGRID" id="111063">
    <property type="interactions" value="1"/>
</dbReference>
<dbReference type="CORUM" id="P56373"/>
<dbReference type="FunCoup" id="P56373">
    <property type="interactions" value="597"/>
</dbReference>
<dbReference type="IntAct" id="P56373">
    <property type="interactions" value="5"/>
</dbReference>
<dbReference type="MINT" id="P56373"/>
<dbReference type="STRING" id="9606.ENSP00000263314"/>
<dbReference type="BindingDB" id="P56373"/>
<dbReference type="ChEMBL" id="CHEMBL2998"/>
<dbReference type="DrugBank" id="DB15097">
    <property type="generic name" value="Gefapixant"/>
</dbReference>
<dbReference type="DrugBank" id="DB01069">
    <property type="generic name" value="Promethazine"/>
</dbReference>
<dbReference type="DrugCentral" id="P56373"/>
<dbReference type="GuidetoPHARMACOLOGY" id="480"/>
<dbReference type="TCDB" id="1.A.7.1.6">
    <property type="family name" value="the atp-gated p2x receptor cation channel (p2x receptor) family"/>
</dbReference>
<dbReference type="GlyCosmos" id="P56373">
    <property type="glycosylation" value="4 sites, No reported glycans"/>
</dbReference>
<dbReference type="GlyGen" id="P56373">
    <property type="glycosylation" value="5 sites"/>
</dbReference>
<dbReference type="iPTMnet" id="P56373"/>
<dbReference type="PhosphoSitePlus" id="P56373"/>
<dbReference type="BioMuta" id="P2RX3"/>
<dbReference type="DMDM" id="259016295"/>
<dbReference type="MassIVE" id="P56373"/>
<dbReference type="PaxDb" id="9606-ENSP00000263314"/>
<dbReference type="PeptideAtlas" id="P56373"/>
<dbReference type="Antibodypedia" id="14096">
    <property type="antibodies" value="254 antibodies from 31 providers"/>
</dbReference>
<dbReference type="DNASU" id="5024"/>
<dbReference type="Ensembl" id="ENST00000263314.3">
    <property type="protein sequence ID" value="ENSP00000263314.2"/>
    <property type="gene ID" value="ENSG00000109991.10"/>
</dbReference>
<dbReference type="GeneID" id="5024"/>
<dbReference type="KEGG" id="hsa:5024"/>
<dbReference type="MANE-Select" id="ENST00000263314.3">
    <property type="protein sequence ID" value="ENSP00000263314.2"/>
    <property type="RefSeq nucleotide sequence ID" value="NM_002559.5"/>
    <property type="RefSeq protein sequence ID" value="NP_002550.2"/>
</dbReference>
<dbReference type="UCSC" id="uc001nju.4">
    <property type="organism name" value="human"/>
</dbReference>
<dbReference type="AGR" id="HGNC:8534"/>
<dbReference type="CTD" id="5024"/>
<dbReference type="DisGeNET" id="5024"/>
<dbReference type="GeneCards" id="P2RX3"/>
<dbReference type="HGNC" id="HGNC:8534">
    <property type="gene designation" value="P2RX3"/>
</dbReference>
<dbReference type="HPA" id="ENSG00000109991">
    <property type="expression patterns" value="Tissue enhanced (heart muscle, liver, testis)"/>
</dbReference>
<dbReference type="MIM" id="600843">
    <property type="type" value="gene"/>
</dbReference>
<dbReference type="neXtProt" id="NX_P56373"/>
<dbReference type="OpenTargets" id="ENSG00000109991"/>
<dbReference type="PharmGKB" id="PA32863"/>
<dbReference type="VEuPathDB" id="HostDB:ENSG00000109991"/>
<dbReference type="eggNOG" id="ENOG502QUDE">
    <property type="taxonomic scope" value="Eukaryota"/>
</dbReference>
<dbReference type="GeneTree" id="ENSGT01020000230351"/>
<dbReference type="HOGENOM" id="CLU_034469_8_0_1"/>
<dbReference type="InParanoid" id="P56373"/>
<dbReference type="OMA" id="GRCEEKQ"/>
<dbReference type="OrthoDB" id="494673at2759"/>
<dbReference type="PAN-GO" id="P56373">
    <property type="GO annotations" value="2 GO annotations based on evolutionary models"/>
</dbReference>
<dbReference type="PhylomeDB" id="P56373"/>
<dbReference type="TreeFam" id="TF328633"/>
<dbReference type="PathwayCommons" id="P56373"/>
<dbReference type="Reactome" id="R-HSA-139853">
    <property type="pathway name" value="Elevation of cytosolic Ca2+ levels"/>
</dbReference>
<dbReference type="Reactome" id="R-HSA-418346">
    <property type="pathway name" value="Platelet homeostasis"/>
</dbReference>
<dbReference type="BioGRID-ORCS" id="5024">
    <property type="hits" value="18 hits in 1150 CRISPR screens"/>
</dbReference>
<dbReference type="ChiTaRS" id="P2RX3">
    <property type="organism name" value="human"/>
</dbReference>
<dbReference type="GeneWiki" id="P2RX3"/>
<dbReference type="GenomeRNAi" id="5024"/>
<dbReference type="Pharos" id="P56373">
    <property type="development level" value="Tclin"/>
</dbReference>
<dbReference type="PRO" id="PR:P56373"/>
<dbReference type="Proteomes" id="UP000005640">
    <property type="component" value="Chromosome 11"/>
</dbReference>
<dbReference type="RNAct" id="P56373">
    <property type="molecule type" value="protein"/>
</dbReference>
<dbReference type="Bgee" id="ENSG00000109991">
    <property type="expression patterns" value="Expressed in primordial germ cell in gonad and 60 other cell types or tissues"/>
</dbReference>
<dbReference type="ExpressionAtlas" id="P56373">
    <property type="expression patterns" value="baseline and differential"/>
</dbReference>
<dbReference type="GO" id="GO:0030424">
    <property type="term" value="C:axon"/>
    <property type="evidence" value="ECO:0007669"/>
    <property type="project" value="Ensembl"/>
</dbReference>
<dbReference type="GO" id="GO:0098686">
    <property type="term" value="C:hippocampal mossy fiber to CA3 synapse"/>
    <property type="evidence" value="ECO:0007669"/>
    <property type="project" value="Ensembl"/>
</dbReference>
<dbReference type="GO" id="GO:0005886">
    <property type="term" value="C:plasma membrane"/>
    <property type="evidence" value="ECO:0000315"/>
    <property type="project" value="UniProtKB"/>
</dbReference>
<dbReference type="GO" id="GO:0098794">
    <property type="term" value="C:postsynapse"/>
    <property type="evidence" value="ECO:0007669"/>
    <property type="project" value="GOC"/>
</dbReference>
<dbReference type="GO" id="GO:0043235">
    <property type="term" value="C:receptor complex"/>
    <property type="evidence" value="ECO:0000314"/>
    <property type="project" value="MGI"/>
</dbReference>
<dbReference type="GO" id="GO:0098685">
    <property type="term" value="C:Schaffer collateral - CA1 synapse"/>
    <property type="evidence" value="ECO:0007669"/>
    <property type="project" value="Ensembl"/>
</dbReference>
<dbReference type="GO" id="GO:0005524">
    <property type="term" value="F:ATP binding"/>
    <property type="evidence" value="ECO:0000314"/>
    <property type="project" value="UniProtKB"/>
</dbReference>
<dbReference type="GO" id="GO:0004931">
    <property type="term" value="F:extracellularly ATP-gated monoatomic cation channel activity"/>
    <property type="evidence" value="ECO:0000314"/>
    <property type="project" value="UniProtKB"/>
</dbReference>
<dbReference type="GO" id="GO:0046872">
    <property type="term" value="F:metal ion binding"/>
    <property type="evidence" value="ECO:0007669"/>
    <property type="project" value="UniProtKB-KW"/>
</dbReference>
<dbReference type="GO" id="GO:0001614">
    <property type="term" value="F:purinergic nucleotide receptor activity"/>
    <property type="evidence" value="ECO:0000314"/>
    <property type="project" value="UniProtKB"/>
</dbReference>
<dbReference type="GO" id="GO:0048266">
    <property type="term" value="P:behavioral response to pain"/>
    <property type="evidence" value="ECO:0007669"/>
    <property type="project" value="Ensembl"/>
</dbReference>
<dbReference type="GO" id="GO:0070588">
    <property type="term" value="P:calcium ion transmembrane transport"/>
    <property type="evidence" value="ECO:0000314"/>
    <property type="project" value="UniProtKB"/>
</dbReference>
<dbReference type="GO" id="GO:0071318">
    <property type="term" value="P:cellular response to ATP"/>
    <property type="evidence" value="ECO:0000314"/>
    <property type="project" value="UniProtKB"/>
</dbReference>
<dbReference type="GO" id="GO:0051649">
    <property type="term" value="P:establishment of localization in cell"/>
    <property type="evidence" value="ECO:0007669"/>
    <property type="project" value="Ensembl"/>
</dbReference>
<dbReference type="GO" id="GO:0098662">
    <property type="term" value="P:inorganic cation transmembrane transport"/>
    <property type="evidence" value="ECO:0000314"/>
    <property type="project" value="UniProtKB"/>
</dbReference>
<dbReference type="GO" id="GO:0007274">
    <property type="term" value="P:neuromuscular synaptic transmission"/>
    <property type="evidence" value="ECO:0007669"/>
    <property type="project" value="Ensembl"/>
</dbReference>
<dbReference type="GO" id="GO:0030432">
    <property type="term" value="P:peristalsis"/>
    <property type="evidence" value="ECO:0007669"/>
    <property type="project" value="Ensembl"/>
</dbReference>
<dbReference type="GO" id="GO:0010524">
    <property type="term" value="P:positive regulation of calcium ion transport into cytosol"/>
    <property type="evidence" value="ECO:0000303"/>
    <property type="project" value="BHF-UCL"/>
</dbReference>
<dbReference type="GO" id="GO:0050850">
    <property type="term" value="P:positive regulation of calcium-mediated signaling"/>
    <property type="evidence" value="ECO:0000303"/>
    <property type="project" value="BHF-UCL"/>
</dbReference>
<dbReference type="GO" id="GO:0070207">
    <property type="term" value="P:protein homotrimerization"/>
    <property type="evidence" value="ECO:0000314"/>
    <property type="project" value="UniProtKB"/>
</dbReference>
<dbReference type="GO" id="GO:0048167">
    <property type="term" value="P:regulation of synaptic plasticity"/>
    <property type="evidence" value="ECO:0007669"/>
    <property type="project" value="Ensembl"/>
</dbReference>
<dbReference type="GO" id="GO:0009743">
    <property type="term" value="P:response to carbohydrate"/>
    <property type="evidence" value="ECO:0007669"/>
    <property type="project" value="Ensembl"/>
</dbReference>
<dbReference type="GO" id="GO:0009409">
    <property type="term" value="P:response to cold"/>
    <property type="evidence" value="ECO:0007669"/>
    <property type="project" value="Ensembl"/>
</dbReference>
<dbReference type="GO" id="GO:0009408">
    <property type="term" value="P:response to heat"/>
    <property type="evidence" value="ECO:0007669"/>
    <property type="project" value="Ensembl"/>
</dbReference>
<dbReference type="GO" id="GO:0001666">
    <property type="term" value="P:response to hypoxia"/>
    <property type="evidence" value="ECO:0007669"/>
    <property type="project" value="Ensembl"/>
</dbReference>
<dbReference type="GO" id="GO:0009612">
    <property type="term" value="P:response to mechanical stimulus"/>
    <property type="evidence" value="ECO:0007669"/>
    <property type="project" value="Ensembl"/>
</dbReference>
<dbReference type="GO" id="GO:0050909">
    <property type="term" value="P:sensory perception of taste"/>
    <property type="evidence" value="ECO:0007669"/>
    <property type="project" value="Ensembl"/>
</dbReference>
<dbReference type="GO" id="GO:0007165">
    <property type="term" value="P:signal transduction"/>
    <property type="evidence" value="ECO:0000304"/>
    <property type="project" value="ProtInc"/>
</dbReference>
<dbReference type="GO" id="GO:0014832">
    <property type="term" value="P:urinary bladder smooth muscle contraction"/>
    <property type="evidence" value="ECO:0007669"/>
    <property type="project" value="Ensembl"/>
</dbReference>
<dbReference type="FunFam" id="2.60.490.10:FF:000001">
    <property type="entry name" value="P2X purinoceptor"/>
    <property type="match status" value="1"/>
</dbReference>
<dbReference type="FunFam" id="1.10.287.940:FF:000010">
    <property type="entry name" value="P2X receptor E"/>
    <property type="match status" value="1"/>
</dbReference>
<dbReference type="Gene3D" id="1.10.287.940">
    <property type="entry name" value="atp-gated p2x4 ion channel"/>
    <property type="match status" value="1"/>
</dbReference>
<dbReference type="Gene3D" id="2.60.490.10">
    <property type="entry name" value="atp-gated p2x4 ion channel domain"/>
    <property type="match status" value="1"/>
</dbReference>
<dbReference type="InterPro" id="IPR003046">
    <property type="entry name" value="P2X3_purnocptor"/>
</dbReference>
<dbReference type="InterPro" id="IPR027309">
    <property type="entry name" value="P2X_extracellular_dom_sf"/>
</dbReference>
<dbReference type="InterPro" id="IPR001429">
    <property type="entry name" value="P2X_purnocptor"/>
</dbReference>
<dbReference type="InterPro" id="IPR053792">
    <property type="entry name" value="P2X_RECEPTOR_CS"/>
</dbReference>
<dbReference type="NCBIfam" id="TIGR00863">
    <property type="entry name" value="P2X"/>
    <property type="match status" value="1"/>
</dbReference>
<dbReference type="PANTHER" id="PTHR10125">
    <property type="entry name" value="P2X PURINOCEPTOR"/>
    <property type="match status" value="1"/>
</dbReference>
<dbReference type="PANTHER" id="PTHR10125:SF8">
    <property type="entry name" value="P2X PURINOCEPTOR 3"/>
    <property type="match status" value="1"/>
</dbReference>
<dbReference type="Pfam" id="PF00864">
    <property type="entry name" value="P2X_receptor"/>
    <property type="match status" value="1"/>
</dbReference>
<dbReference type="PIRSF" id="PIRSF005713">
    <property type="entry name" value="P2X_purinoceptor"/>
    <property type="match status" value="1"/>
</dbReference>
<dbReference type="PRINTS" id="PR01310">
    <property type="entry name" value="P2X3RECEPTOR"/>
</dbReference>
<dbReference type="PRINTS" id="PR01307">
    <property type="entry name" value="P2XRECEPTOR"/>
</dbReference>
<dbReference type="PROSITE" id="PS01212">
    <property type="entry name" value="P2X_RECEPTOR"/>
    <property type="match status" value="1"/>
</dbReference>
<protein>
    <recommendedName>
        <fullName>P2X purinoceptor 3</fullName>
        <shortName>P2X3</shortName>
    </recommendedName>
    <alternativeName>
        <fullName>ATP receptor</fullName>
    </alternativeName>
    <alternativeName>
        <fullName>Purinergic receptor</fullName>
    </alternativeName>
</protein>
<comment type="function">
    <text evidence="2 4 5 6 7">Extracellular ATP-activated non-selective cation channel (PubMed:10440098, PubMed:27626375, PubMed:29674445, PubMed:31232692). Plays particularly important role in sensory neurons where its activation is critical for gustatory, nociceptive responses, visceral reflexes and sensory hypersensitization (By similarity).</text>
</comment>
<comment type="catalytic activity">
    <reaction evidence="4">
        <text>Ca(2+)(in) = Ca(2+)(out)</text>
        <dbReference type="Rhea" id="RHEA:29671"/>
        <dbReference type="ChEBI" id="CHEBI:29108"/>
    </reaction>
</comment>
<comment type="catalytic activity">
    <reaction evidence="5">
        <text>Na(+)(in) = Na(+)(out)</text>
        <dbReference type="Rhea" id="RHEA:34963"/>
        <dbReference type="ChEBI" id="CHEBI:29101"/>
    </reaction>
</comment>
<comment type="activity regulation">
    <text evidence="4 6 7">Has high sensitivity to ATP. Fast activation by external ATP. Exhibits rapid desensitization. Sensitives to the ATP agonist:alpha/beta-methylene-ATP (PubMed:10440098). Subject to allosteric inhibition by AF-219 (PubMed:29674445). Mg(2+) and Ca(2+) slow deactivation of P2RX3 (PubMed:31232692).</text>
</comment>
<comment type="subunit">
    <text evidence="1 5 7">Homotrimer (PubMed:27626375, PubMed:31232692). Forms heterotrimer with P2RX2. Heterotrimeric P2RX2/3 has a ligand dose-response profile that is distinct from either homotrimeric P2RX2 or P2RX3 (By similarity).</text>
</comment>
<comment type="subcellular location">
    <subcellularLocation>
        <location evidence="5">Cell membrane</location>
        <topology evidence="5">Multi-pass membrane protein</topology>
    </subcellularLocation>
    <text evidence="1">Localizes to neuronal cell body of sensory neurons.</text>
</comment>
<comment type="domain">
    <text evidence="6">Contains extracellular allosteric binding sites-distinct from the orthosteric binding site.</text>
</comment>
<comment type="similarity">
    <text evidence="9">Belongs to the P2X receptor family.</text>
</comment>
<comment type="online information" name="Wikipedia">
    <link uri="https://en.wikipedia.org/wiki/P2X_receptor"/>
    <text>P2X receptor entry</text>
</comment>
<proteinExistence type="evidence at protein level"/>
<evidence type="ECO:0000250" key="1">
    <source>
        <dbReference type="UniProtKB" id="P49654"/>
    </source>
</evidence>
<evidence type="ECO:0000250" key="2">
    <source>
        <dbReference type="UniProtKB" id="Q3UR32"/>
    </source>
</evidence>
<evidence type="ECO:0000256" key="3">
    <source>
        <dbReference type="SAM" id="MobiDB-lite"/>
    </source>
</evidence>
<evidence type="ECO:0000269" key="4">
    <source>
    </source>
</evidence>
<evidence type="ECO:0000269" key="5">
    <source>
    </source>
</evidence>
<evidence type="ECO:0000269" key="6">
    <source>
    </source>
</evidence>
<evidence type="ECO:0000269" key="7">
    <source>
    </source>
</evidence>
<evidence type="ECO:0000269" key="8">
    <source ref="2"/>
</evidence>
<evidence type="ECO:0000305" key="9"/>
<evidence type="ECO:0007744" key="10">
    <source>
        <dbReference type="PDB" id="5SVJ"/>
    </source>
</evidence>
<evidence type="ECO:0007744" key="11">
    <source>
        <dbReference type="PDB" id="5SVK"/>
    </source>
</evidence>
<evidence type="ECO:0007744" key="12">
    <source>
        <dbReference type="PDB" id="5SVL"/>
    </source>
</evidence>
<evidence type="ECO:0007744" key="13">
    <source>
        <dbReference type="PDB" id="5SVM"/>
    </source>
</evidence>
<evidence type="ECO:0007744" key="14">
    <source>
        <dbReference type="PDB" id="5SVP"/>
    </source>
</evidence>
<evidence type="ECO:0007744" key="15">
    <source>
        <dbReference type="PDB" id="5SVQ"/>
    </source>
</evidence>
<evidence type="ECO:0007744" key="16">
    <source>
        <dbReference type="PDB" id="5SVR"/>
    </source>
</evidence>
<evidence type="ECO:0007744" key="17">
    <source>
        <dbReference type="PDB" id="5SVS"/>
    </source>
</evidence>
<evidence type="ECO:0007744" key="18">
    <source>
        <dbReference type="PDB" id="5SVT"/>
    </source>
</evidence>
<evidence type="ECO:0007744" key="19">
    <source>
        <dbReference type="PDB" id="5YVE"/>
    </source>
</evidence>
<evidence type="ECO:0007744" key="20">
    <source>
        <dbReference type="PDB" id="6AH4"/>
    </source>
</evidence>
<evidence type="ECO:0007744" key="21">
    <source>
        <dbReference type="PDB" id="6AH5"/>
    </source>
</evidence>
<evidence type="ECO:0007829" key="22">
    <source>
        <dbReference type="PDB" id="5SVJ"/>
    </source>
</evidence>
<evidence type="ECO:0007829" key="23">
    <source>
        <dbReference type="PDB" id="5SVK"/>
    </source>
</evidence>
<evidence type="ECO:0007829" key="24">
    <source>
        <dbReference type="PDB" id="5SVL"/>
    </source>
</evidence>
<evidence type="ECO:0007829" key="25">
    <source>
        <dbReference type="PDB" id="6AH4"/>
    </source>
</evidence>
<keyword id="KW-0002">3D-structure</keyword>
<keyword id="KW-0067">ATP-binding</keyword>
<keyword id="KW-0106">Calcium</keyword>
<keyword id="KW-1003">Cell membrane</keyword>
<keyword id="KW-1015">Disulfide bond</keyword>
<keyword id="KW-0325">Glycoprotein</keyword>
<keyword id="KW-0407">Ion channel</keyword>
<keyword id="KW-0406">Ion transport</keyword>
<keyword id="KW-1071">Ligand-gated ion channel</keyword>
<keyword id="KW-0460">Magnesium</keyword>
<keyword id="KW-0472">Membrane</keyword>
<keyword id="KW-0479">Metal-binding</keyword>
<keyword id="KW-0547">Nucleotide-binding</keyword>
<keyword id="KW-1267">Proteomics identification</keyword>
<keyword id="KW-0675">Receptor</keyword>
<keyword id="KW-1185">Reference proteome</keyword>
<keyword id="KW-0812">Transmembrane</keyword>
<keyword id="KW-1133">Transmembrane helix</keyword>
<keyword id="KW-0813">Transport</keyword>
<organism>
    <name type="scientific">Homo sapiens</name>
    <name type="common">Human</name>
    <dbReference type="NCBI Taxonomy" id="9606"/>
    <lineage>
        <taxon>Eukaryota</taxon>
        <taxon>Metazoa</taxon>
        <taxon>Chordata</taxon>
        <taxon>Craniata</taxon>
        <taxon>Vertebrata</taxon>
        <taxon>Euteleostomi</taxon>
        <taxon>Mammalia</taxon>
        <taxon>Eutheria</taxon>
        <taxon>Euarchontoglires</taxon>
        <taxon>Primates</taxon>
        <taxon>Haplorrhini</taxon>
        <taxon>Catarrhini</taxon>
        <taxon>Hominidae</taxon>
        <taxon>Homo</taxon>
    </lineage>
</organism>
<accession>P56373</accession>
<accession>Q6DK37</accession>
<accession>Q9UQB6</accession>
<gene>
    <name type="primary">P2RX3</name>
</gene>
<sequence length="397" mass="44289">MNCISDFFTYETTKSVVVKSWTIGIINRVVQLLIISYFVGWVFLHEKAYQVRDTAIESSVVTKVKGSGLYANRVMDVSDYVTPPQGTSVFVIITKMIVTENQMQGFCPESEEKYRCVSDSQCGPERLPGGGILTGRCVNYSSVLRTCEIQGWCPTEVDTVETPIMMEAENFTIFIKNSIRFPLFNFEKGNLLPNLTARDMKTCRFHPDKDPFCPILRVGDVVKFAGQDFAKLARTGGVLGIKIGWVCDLDKAWDQCIPKYSFTRLDSVSEKSSVSPGYNFRFAKYYKMENGSEYRTLLKAFGIRFDVLVYGNAGKFNIIPTIISSVAAFTSVGVGTVLCDIILLNFLKGADQYKAKKFEEVNETTLKIAALTNPVYPSDQTTAEKQSTDSGAFSIGH</sequence>
<name>P2RX3_HUMAN</name>
<reference key="1">
    <citation type="journal article" date="1997" name="Mol. Pharmacol.">
        <title>Characterization of recombinant human P2X4 receptor reveals pharmacological differences to the rat homologue.</title>
        <authorList>
            <person name="Garcia-Guzman M."/>
            <person name="Soto F."/>
            <person name="Gomez-Hernandez J.M."/>
            <person name="Lund P.E."/>
            <person name="Stuhmer W."/>
        </authorList>
    </citation>
    <scope>NUCLEOTIDE SEQUENCE [MRNA]</scope>
    <source>
        <tissue>Heart</tissue>
    </source>
</reference>
<reference key="2">
    <citation type="submission" date="1998-07" db="EMBL/GenBank/DDBJ databases">
        <title>Cloning of a cDNA for human P2X3 purinoceptor variant.</title>
        <authorList>
            <person name="Funatsuki K."/>
            <person name="Tanaka R."/>
            <person name="Inagaki S."/>
            <person name="Kawamura Y."/>
            <person name="Hashimoto Y."/>
            <person name="Yukioka H."/>
            <person name="Okuda U."/>
            <person name="Katoh K."/>
        </authorList>
    </citation>
    <scope>NUCLEOTIDE SEQUENCE [MRNA]</scope>
    <scope>VARIANT VAL-383</scope>
    <source>
        <tissue>Heart</tissue>
    </source>
</reference>
<reference key="3">
    <citation type="journal article" date="2006" name="Nature">
        <title>Human chromosome 11 DNA sequence and analysis including novel gene identification.</title>
        <authorList>
            <person name="Taylor T.D."/>
            <person name="Noguchi H."/>
            <person name="Totoki Y."/>
            <person name="Toyoda A."/>
            <person name="Kuroki Y."/>
            <person name="Dewar K."/>
            <person name="Lloyd C."/>
            <person name="Itoh T."/>
            <person name="Takeda T."/>
            <person name="Kim D.-W."/>
            <person name="She X."/>
            <person name="Barlow K.F."/>
            <person name="Bloom T."/>
            <person name="Bruford E."/>
            <person name="Chang J.L."/>
            <person name="Cuomo C.A."/>
            <person name="Eichler E."/>
            <person name="FitzGerald M.G."/>
            <person name="Jaffe D.B."/>
            <person name="LaButti K."/>
            <person name="Nicol R."/>
            <person name="Park H.-S."/>
            <person name="Seaman C."/>
            <person name="Sougnez C."/>
            <person name="Yang X."/>
            <person name="Zimmer A.R."/>
            <person name="Zody M.C."/>
            <person name="Birren B.W."/>
            <person name="Nusbaum C."/>
            <person name="Fujiyama A."/>
            <person name="Hattori M."/>
            <person name="Rogers J."/>
            <person name="Lander E.S."/>
            <person name="Sakaki Y."/>
        </authorList>
    </citation>
    <scope>NUCLEOTIDE SEQUENCE [LARGE SCALE GENOMIC DNA]</scope>
</reference>
<reference key="4">
    <citation type="journal article" date="2004" name="Genome Res.">
        <title>The status, quality, and expansion of the NIH full-length cDNA project: the Mammalian Gene Collection (MGC).</title>
        <authorList>
            <consortium name="The MGC Project Team"/>
        </authorList>
    </citation>
    <scope>NUCLEOTIDE SEQUENCE [LARGE SCALE MRNA]</scope>
    <source>
        <tissue>Brain</tissue>
    </source>
</reference>
<reference key="5">
    <citation type="journal article" date="1999" name="Eur. J. Pharmacol.">
        <title>Pharmacological characterization of recombinant human and rat P2X receptor subtypes.</title>
        <authorList>
            <person name="Bianchi B.R."/>
            <person name="Lynch K.J."/>
            <person name="Touma E."/>
            <person name="Niforatos W."/>
            <person name="Burgard E.C."/>
            <person name="Alexander K.M."/>
            <person name="Park H.S."/>
            <person name="Yu H."/>
            <person name="Metzger R."/>
            <person name="Kowaluk E."/>
            <person name="Jarvis M.F."/>
            <person name="van Biesen T."/>
        </authorList>
    </citation>
    <scope>FUNCTION</scope>
    <scope>TRANSPORTER ACTIVITY</scope>
    <scope>ACTIVITY REGULATION</scope>
</reference>
<reference evidence="10 11 12 13 14 15 16 17 18" key="6">
    <citation type="journal article" date="2016" name="Nature">
        <title>X-ray structures define human P2X(3) receptor gating cycle and antagonist action.</title>
        <authorList>
            <person name="Mansoor S.E."/>
            <person name="Lu W."/>
            <person name="Oosterheert W."/>
            <person name="Shekhar M."/>
            <person name="Tajkhorshid E."/>
            <person name="Gouaux E."/>
        </authorList>
    </citation>
    <scope>X-RAY CRYSTALLOGRAPHY (2.77 ANGSTROMS) OF 6-364 IN COMPLEXES WITH ATP AND ATP ANALOG</scope>
    <scope>FUNCTION</scope>
    <scope>TRANSPORTER ACTIVITY</scope>
    <scope>SUBCELLULAR LOCATION</scope>
    <scope>TOPOLOGY</scope>
    <scope>SUBUNIT</scope>
    <scope>GLYCOSYLATION AT ASN-139; ASN-170; ASN-194 AND ASN-290</scope>
    <scope>DISULFIDE BONDS</scope>
</reference>
<reference evidence="19" key="7">
    <citation type="journal article" date="2018" name="Proc. Natl. Acad. Sci. U.S.A.">
        <title>Druggable negative allosteric site of P2X3 receptors.</title>
        <authorList>
            <person name="Wang J."/>
            <person name="Wang Y."/>
            <person name="Cui W.W."/>
            <person name="Huang Y."/>
            <person name="Yang Y."/>
            <person name="Liu Y."/>
            <person name="Zhao W.S."/>
            <person name="Cheng X.Y."/>
            <person name="Sun W.S."/>
            <person name="Cao P."/>
            <person name="Zhu M.X."/>
            <person name="Wang R."/>
            <person name="Hattori M."/>
            <person name="Yu Y."/>
        </authorList>
    </citation>
    <scope>X-RAY CRYSTALLOGRAPHY (3.40 ANGSTROMS) OF 6-364 IN COMPLEXES WITH ALLOSTERIC INHIBITOR AF-219 AND MG(2+)</scope>
    <scope>FUNCTION</scope>
    <scope>ACTIVITY REGULATION</scope>
    <scope>DISULFIDE BOND</scope>
    <scope>GLYCOSYLATION AT ASN-170 AND ASN-290</scope>
    <scope>MUTAGENESIS OF VAL-61; LYS-176; SER-178; GLY-189; ASN-190; VAL-238; ARG-264; LEU-265 AND SER-267</scope>
</reference>
<reference evidence="20 21" key="8">
    <citation type="journal article" date="2019" name="Elife">
        <title>Molecular mechanisms of human P2X3 receptor channel activation and modulation by divalent cation bound ATP.</title>
        <authorList>
            <person name="Li M."/>
            <person name="Wang Y."/>
            <person name="Banerjee R."/>
            <person name="Marinelli F."/>
            <person name="Silberberg S."/>
            <person name="Faraldo-Gomez J.D."/>
            <person name="Hattori M."/>
            <person name="Swartz K.J."/>
        </authorList>
    </citation>
    <scope>X-RAY CRYSTALLOGRAPHY (3.30 ANGSTROMS) OF 17-363 IN COMPLEX WITH ATP; CA(2+) AND MG(2+)</scope>
    <scope>GLYCOSYLATION AT ASN-170; ASN-194 AND ASN-290</scope>
    <scope>FUNCTION</scope>
    <scope>ACTIVITY REGULATION</scope>
</reference>
<feature type="chain" id="PRO_0000161551" description="P2X purinoceptor 3">
    <location>
        <begin position="1"/>
        <end position="397"/>
    </location>
</feature>
<feature type="topological domain" description="Cytoplasmic" evidence="5">
    <location>
        <begin position="1"/>
        <end position="20"/>
    </location>
</feature>
<feature type="transmembrane region" description="Helical; Name=1" evidence="5">
    <location>
        <begin position="21"/>
        <end position="43"/>
    </location>
</feature>
<feature type="topological domain" description="Extracellular" evidence="5">
    <location>
        <begin position="44"/>
        <end position="322"/>
    </location>
</feature>
<feature type="transmembrane region" description="Helical; Name=2" evidence="5">
    <location>
        <begin position="323"/>
        <end position="341"/>
    </location>
</feature>
<feature type="topological domain" description="Cytoplasmic" evidence="5">
    <location>
        <begin position="342"/>
        <end position="397"/>
    </location>
</feature>
<feature type="region of interest" description="Disordered" evidence="3">
    <location>
        <begin position="378"/>
        <end position="397"/>
    </location>
</feature>
<feature type="compositionally biased region" description="Polar residues" evidence="3">
    <location>
        <begin position="378"/>
        <end position="391"/>
    </location>
</feature>
<feature type="binding site" evidence="21">
    <location>
        <position position="63"/>
    </location>
    <ligand>
        <name>ATP</name>
        <dbReference type="ChEBI" id="CHEBI:30616"/>
        <note>ligand shared between two neighboring subunits of the homotrimer</note>
    </ligand>
</feature>
<feature type="binding site" evidence="11 12 20 21">
    <location>
        <position position="65"/>
    </location>
    <ligand>
        <name>ATP</name>
        <dbReference type="ChEBI" id="CHEBI:30616"/>
        <note>ligand shared between two neighboring subunits of the homotrimer</note>
    </ligand>
</feature>
<feature type="binding site" evidence="6 19">
    <location>
        <position position="111"/>
    </location>
    <ligand>
        <name>Mg(2+)</name>
        <dbReference type="ChEBI" id="CHEBI:18420"/>
    </ligand>
</feature>
<feature type="binding site" evidence="7 20">
    <location>
        <position position="158"/>
    </location>
    <ligand>
        <name>Ca(2+)</name>
        <dbReference type="ChEBI" id="CHEBI:29108"/>
    </ligand>
</feature>
<feature type="binding site" evidence="6 7 17 19 21">
    <location>
        <position position="158"/>
    </location>
    <ligand>
        <name>Mg(2+)</name>
        <dbReference type="ChEBI" id="CHEBI:18420"/>
    </ligand>
</feature>
<feature type="binding site" evidence="11 12 20 21">
    <location>
        <position position="172"/>
    </location>
    <ligand>
        <name>ATP</name>
        <dbReference type="ChEBI" id="CHEBI:30616"/>
        <note>ligand shared between two neighboring subunits of the homotrimer</note>
    </ligand>
</feature>
<feature type="binding site" evidence="11 12 13 14 20 21">
    <location>
        <position position="275"/>
    </location>
    <ligand>
        <name>ATP</name>
        <dbReference type="ChEBI" id="CHEBI:30616"/>
        <note>ligand shared between two neighboring subunits of the homotrimer</note>
    </ligand>
</feature>
<feature type="binding site" evidence="11 12 13 14 20 21">
    <location>
        <position position="279"/>
    </location>
    <ligand>
        <name>ATP</name>
        <dbReference type="ChEBI" id="CHEBI:30616"/>
        <note>ligand shared between two neighboring subunits of the homotrimer</note>
    </ligand>
</feature>
<feature type="binding site" evidence="13 14 20 21">
    <location>
        <position position="281"/>
    </location>
    <ligand>
        <name>ATP</name>
        <dbReference type="ChEBI" id="CHEBI:30616"/>
        <note>ligand shared between two neighboring subunits of the homotrimer</note>
    </ligand>
</feature>
<feature type="binding site" evidence="11 12 13 14 20 21">
    <location>
        <position position="299"/>
    </location>
    <ligand>
        <name>ATP</name>
        <dbReference type="ChEBI" id="CHEBI:30616"/>
        <note>ligand shared between two neighboring subunits of the homotrimer</note>
    </ligand>
</feature>
<feature type="glycosylation site" description="N-linked (GlcNAc...) asparagine" evidence="5 11">
    <location>
        <position position="139"/>
    </location>
</feature>
<feature type="glycosylation site" description="N-linked (GlcNAc...) asparagine" evidence="5 6 7 10 11 12 13 14 15 16 17 18 19 20 21">
    <location>
        <position position="170"/>
    </location>
</feature>
<feature type="glycosylation site" description="N-linked (GlcNAc...) asparagine" evidence="5 7 10 11 12 13 14 15 17 18 20 21">
    <location>
        <position position="194"/>
    </location>
</feature>
<feature type="glycosylation site" description="N-linked (GlcNAc...) asparagine" evidence="5 6 7 10 11 12 13 14 15 16 17 18 19 20 21">
    <location>
        <position position="290"/>
    </location>
</feature>
<feature type="disulfide bond" evidence="5 6 10 11 12 13 14 15 16 17 18 19">
    <location>
        <begin position="107"/>
        <end position="153"/>
    </location>
</feature>
<feature type="disulfide bond" evidence="5 6 10 11 12 13 14 15 16 17 18 19">
    <location>
        <begin position="116"/>
        <end position="137"/>
    </location>
</feature>
<feature type="disulfide bond" evidence="5 6 10 11 12 13 14 15 16 17 18 19">
    <location>
        <begin position="122"/>
        <end position="147"/>
    </location>
</feature>
<feature type="disulfide bond" evidence="5 6 10 11 12 13 14 15 16 17 18 19">
    <location>
        <begin position="203"/>
        <end position="213"/>
    </location>
</feature>
<feature type="disulfide bond" evidence="5 6 10 11 12 13 14 15 16 17 18 19">
    <location>
        <begin position="247"/>
        <end position="256"/>
    </location>
</feature>
<feature type="sequence variant" id="VAR_034674" description="In dbSNP:rs2276038." evidence="8">
    <original>A</original>
    <variation>V</variation>
    <location>
        <position position="383"/>
    </location>
</feature>
<feature type="mutagenesis site" description="Decreases sensitivity to the allosteric inhibitor AF-219." evidence="6">
    <original>V</original>
    <variation>R</variation>
    <location>
        <position position="61"/>
    </location>
</feature>
<feature type="mutagenesis site" description="Does not affect the inhibition the allosteric inhibitor AF-219." evidence="6">
    <original>K</original>
    <variation>R</variation>
    <location>
        <position position="176"/>
    </location>
</feature>
<feature type="mutagenesis site" description="Does not affect the inhibition the allosteric inhibitor AF-219." evidence="6">
    <original>S</original>
    <variation>F</variation>
    <location>
        <position position="178"/>
    </location>
</feature>
<feature type="mutagenesis site" description="Abolishes the inhibition by the allosteric inhibitor AF-219." evidence="6">
    <original>G</original>
    <variation>A</variation>
    <location>
        <position position="189"/>
    </location>
</feature>
<feature type="mutagenesis site" description="Decreases sensitivity to the allosteric inhibitor AF-219." evidence="6">
    <original>N</original>
    <variation>A</variation>
    <location>
        <position position="190"/>
    </location>
</feature>
<feature type="mutagenesis site" description="Decreases sensitivity to the allosteric inhibitor AF-219." evidence="6">
    <original>V</original>
    <variation>L</variation>
    <location>
        <position position="238"/>
    </location>
</feature>
<feature type="mutagenesis site" description="Decreases sensitivity to the allosteric inhibitor AF-219." evidence="6">
    <original>R</original>
    <variation>A</variation>
    <location>
        <position position="264"/>
    </location>
</feature>
<feature type="mutagenesis site" description="Decreases sensitivity to the allosteric inhibitor AF-219." evidence="6">
    <original>L</original>
    <variation>W</variation>
    <location>
        <position position="265"/>
    </location>
</feature>
<feature type="mutagenesis site" description="Does not affect the inhibition he allosteric inhibitor AF-219." evidence="6">
    <original>S</original>
    <variation>A</variation>
    <location>
        <position position="267"/>
    </location>
</feature>
<feature type="sequence conflict" description="In Ref. 1; CAA68947." evidence="9" ref="1">
    <original>R</original>
    <variation>P</variation>
    <location>
        <position position="126"/>
    </location>
</feature>
<feature type="helix" evidence="24">
    <location>
        <begin position="15"/>
        <end position="18"/>
    </location>
</feature>
<feature type="helix" evidence="23">
    <location>
        <begin position="21"/>
        <end position="40"/>
    </location>
</feature>
<feature type="helix" evidence="23">
    <location>
        <begin position="41"/>
        <end position="45"/>
    </location>
</feature>
<feature type="turn" evidence="24">
    <location>
        <begin position="46"/>
        <end position="49"/>
    </location>
</feature>
<feature type="strand" evidence="23">
    <location>
        <begin position="50"/>
        <end position="53"/>
    </location>
</feature>
<feature type="strand" evidence="23">
    <location>
        <begin position="57"/>
        <end position="65"/>
    </location>
</feature>
<feature type="strand" evidence="23">
    <location>
        <begin position="68"/>
        <end position="70"/>
    </location>
</feature>
<feature type="strand" evidence="23">
    <location>
        <begin position="73"/>
        <end position="75"/>
    </location>
</feature>
<feature type="helix" evidence="23">
    <location>
        <begin position="77"/>
        <end position="80"/>
    </location>
</feature>
<feature type="strand" evidence="23">
    <location>
        <begin position="81"/>
        <end position="83"/>
    </location>
</feature>
<feature type="strand" evidence="23">
    <location>
        <begin position="88"/>
        <end position="108"/>
    </location>
</feature>
<feature type="helix" evidence="23">
    <location>
        <begin position="112"/>
        <end position="114"/>
    </location>
</feature>
<feature type="helix" evidence="23">
    <location>
        <begin position="119"/>
        <end position="121"/>
    </location>
</feature>
<feature type="helix" evidence="23">
    <location>
        <begin position="124"/>
        <end position="126"/>
    </location>
</feature>
<feature type="strand" evidence="23">
    <location>
        <begin position="128"/>
        <end position="143"/>
    </location>
</feature>
<feature type="strand" evidence="23">
    <location>
        <begin position="145"/>
        <end position="154"/>
    </location>
</feature>
<feature type="helix" evidence="23">
    <location>
        <begin position="166"/>
        <end position="170"/>
    </location>
</feature>
<feature type="strand" evidence="23">
    <location>
        <begin position="172"/>
        <end position="181"/>
    </location>
</feature>
<feature type="turn" evidence="23">
    <location>
        <begin position="182"/>
        <end position="185"/>
    </location>
</feature>
<feature type="strand" evidence="23">
    <location>
        <begin position="186"/>
        <end position="191"/>
    </location>
</feature>
<feature type="turn" evidence="22">
    <location>
        <begin position="193"/>
        <end position="195"/>
    </location>
</feature>
<feature type="helix" evidence="23">
    <location>
        <begin position="197"/>
        <end position="202"/>
    </location>
</feature>
<feature type="turn" evidence="23">
    <location>
        <begin position="207"/>
        <end position="209"/>
    </location>
</feature>
<feature type="strand" evidence="23">
    <location>
        <begin position="215"/>
        <end position="217"/>
    </location>
</feature>
<feature type="helix" evidence="23">
    <location>
        <begin position="218"/>
        <end position="224"/>
    </location>
</feature>
<feature type="helix" evidence="23">
    <location>
        <begin position="229"/>
        <end position="235"/>
    </location>
</feature>
<feature type="strand" evidence="23">
    <location>
        <begin position="237"/>
        <end position="248"/>
    </location>
</feature>
<feature type="helix" evidence="23">
    <location>
        <begin position="253"/>
        <end position="255"/>
    </location>
</feature>
<feature type="strand" evidence="23">
    <location>
        <begin position="259"/>
        <end position="265"/>
    </location>
</feature>
<feature type="helix" evidence="23">
    <location>
        <begin position="267"/>
        <end position="270"/>
    </location>
</feature>
<feature type="strand" evidence="25">
    <location>
        <begin position="273"/>
        <end position="275"/>
    </location>
</feature>
<feature type="strand" evidence="23">
    <location>
        <begin position="279"/>
        <end position="287"/>
    </location>
</feature>
<feature type="strand" evidence="23">
    <location>
        <begin position="289"/>
        <end position="291"/>
    </location>
</feature>
<feature type="strand" evidence="23">
    <location>
        <begin position="293"/>
        <end position="316"/>
    </location>
</feature>
<feature type="helix" evidence="23">
    <location>
        <begin position="318"/>
        <end position="332"/>
    </location>
</feature>
<feature type="helix" evidence="23">
    <location>
        <begin position="333"/>
        <end position="335"/>
    </location>
</feature>
<feature type="helix" evidence="23">
    <location>
        <begin position="336"/>
        <end position="345"/>
    </location>
</feature>
<feature type="strand" evidence="23">
    <location>
        <begin position="346"/>
        <end position="348"/>
    </location>
</feature>
<feature type="helix" evidence="23">
    <location>
        <begin position="350"/>
        <end position="357"/>
    </location>
</feature>
<feature type="strand" evidence="25">
    <location>
        <begin position="358"/>
        <end position="360"/>
    </location>
</feature>